<sequence>MALLKISVVVPEGEVYTGEVKSVVLPGVEGEFGVLYGHSNMITLLQAGVVEIETENQKEHIAINWGYAEVTNERVDILADGAVFIKKGSDDRDDAISRAKKLLEDASSDRLAVSSVLAKIESL</sequence>
<name>ATPE_HELPJ</name>
<gene>
    <name type="primary">atpC</name>
    <name type="ordered locus">jhp_1059</name>
</gene>
<accession>Q9ZK82</accession>
<comment type="function">
    <text evidence="1">Produces ATP from ADP in the presence of a proton gradient across the membrane.</text>
</comment>
<comment type="subunit">
    <text>F-type ATPases have 2 components, CF(1) - the catalytic core - and CF(0) - the membrane proton channel. CF(1) has five subunits: alpha(3), beta(3), gamma(1), delta(1), epsilon(1). CF(0) has three main subunits: a, b and c.</text>
</comment>
<comment type="subcellular location">
    <subcellularLocation>
        <location evidence="1">Cell inner membrane</location>
        <topology evidence="1">Peripheral membrane protein</topology>
    </subcellularLocation>
</comment>
<comment type="similarity">
    <text evidence="2">Belongs to the ATPase epsilon chain family.</text>
</comment>
<dbReference type="EMBL" id="AE001439">
    <property type="protein sequence ID" value="AAD06638.1"/>
    <property type="molecule type" value="Genomic_DNA"/>
</dbReference>
<dbReference type="PIR" id="C71855">
    <property type="entry name" value="C71855"/>
</dbReference>
<dbReference type="RefSeq" id="WP_001196332.1">
    <property type="nucleotide sequence ID" value="NZ_CP011330.1"/>
</dbReference>
<dbReference type="SMR" id="Q9ZK82"/>
<dbReference type="KEGG" id="hpj:jhp_1059"/>
<dbReference type="PATRIC" id="fig|85963.30.peg.1529"/>
<dbReference type="eggNOG" id="COG0355">
    <property type="taxonomic scope" value="Bacteria"/>
</dbReference>
<dbReference type="Proteomes" id="UP000000804">
    <property type="component" value="Chromosome"/>
</dbReference>
<dbReference type="GO" id="GO:0005886">
    <property type="term" value="C:plasma membrane"/>
    <property type="evidence" value="ECO:0007669"/>
    <property type="project" value="UniProtKB-SubCell"/>
</dbReference>
<dbReference type="GO" id="GO:0045259">
    <property type="term" value="C:proton-transporting ATP synthase complex"/>
    <property type="evidence" value="ECO:0007669"/>
    <property type="project" value="UniProtKB-KW"/>
</dbReference>
<dbReference type="GO" id="GO:0005524">
    <property type="term" value="F:ATP binding"/>
    <property type="evidence" value="ECO:0007669"/>
    <property type="project" value="UniProtKB-UniRule"/>
</dbReference>
<dbReference type="GO" id="GO:0046933">
    <property type="term" value="F:proton-transporting ATP synthase activity, rotational mechanism"/>
    <property type="evidence" value="ECO:0007669"/>
    <property type="project" value="UniProtKB-UniRule"/>
</dbReference>
<dbReference type="CDD" id="cd12152">
    <property type="entry name" value="F1-ATPase_delta"/>
    <property type="match status" value="1"/>
</dbReference>
<dbReference type="FunFam" id="2.60.15.10:FF:000006">
    <property type="entry name" value="ATP synthase epsilon chain"/>
    <property type="match status" value="1"/>
</dbReference>
<dbReference type="Gene3D" id="2.60.15.10">
    <property type="entry name" value="F0F1 ATP synthase delta/epsilon subunit, N-terminal"/>
    <property type="match status" value="1"/>
</dbReference>
<dbReference type="HAMAP" id="MF_00530">
    <property type="entry name" value="ATP_synth_epsil_bac"/>
    <property type="match status" value="1"/>
</dbReference>
<dbReference type="InterPro" id="IPR001469">
    <property type="entry name" value="ATP_synth_F1_dsu/esu"/>
</dbReference>
<dbReference type="InterPro" id="IPR020546">
    <property type="entry name" value="ATP_synth_F1_dsu/esu_N"/>
</dbReference>
<dbReference type="InterPro" id="IPR036771">
    <property type="entry name" value="ATPsynth_dsu/esu_N"/>
</dbReference>
<dbReference type="NCBIfam" id="TIGR01216">
    <property type="entry name" value="ATP_synt_epsi"/>
    <property type="match status" value="1"/>
</dbReference>
<dbReference type="PANTHER" id="PTHR13822">
    <property type="entry name" value="ATP SYNTHASE DELTA/EPSILON CHAIN"/>
    <property type="match status" value="1"/>
</dbReference>
<dbReference type="PANTHER" id="PTHR13822:SF10">
    <property type="entry name" value="ATP SYNTHASE EPSILON CHAIN, CHLOROPLASTIC"/>
    <property type="match status" value="1"/>
</dbReference>
<dbReference type="Pfam" id="PF02823">
    <property type="entry name" value="ATP-synt_DE_N"/>
    <property type="match status" value="1"/>
</dbReference>
<dbReference type="SUPFAM" id="SSF51344">
    <property type="entry name" value="Epsilon subunit of F1F0-ATP synthase N-terminal domain"/>
    <property type="match status" value="1"/>
</dbReference>
<feature type="chain" id="PRO_0000188145" description="ATP synthase epsilon chain">
    <location>
        <begin position="1"/>
        <end position="123"/>
    </location>
</feature>
<proteinExistence type="inferred from homology"/>
<organism>
    <name type="scientific">Helicobacter pylori (strain J99 / ATCC 700824)</name>
    <name type="common">Campylobacter pylori J99</name>
    <dbReference type="NCBI Taxonomy" id="85963"/>
    <lineage>
        <taxon>Bacteria</taxon>
        <taxon>Pseudomonadati</taxon>
        <taxon>Campylobacterota</taxon>
        <taxon>Epsilonproteobacteria</taxon>
        <taxon>Campylobacterales</taxon>
        <taxon>Helicobacteraceae</taxon>
        <taxon>Helicobacter</taxon>
    </lineage>
</organism>
<keyword id="KW-0066">ATP synthesis</keyword>
<keyword id="KW-0997">Cell inner membrane</keyword>
<keyword id="KW-1003">Cell membrane</keyword>
<keyword id="KW-0139">CF(1)</keyword>
<keyword id="KW-0375">Hydrogen ion transport</keyword>
<keyword id="KW-0406">Ion transport</keyword>
<keyword id="KW-0472">Membrane</keyword>
<keyword id="KW-0813">Transport</keyword>
<protein>
    <recommendedName>
        <fullName>ATP synthase epsilon chain</fullName>
    </recommendedName>
    <alternativeName>
        <fullName>ATP synthase F1 sector epsilon subunit</fullName>
    </alternativeName>
    <alternativeName>
        <fullName>F-ATPase epsilon subunit</fullName>
    </alternativeName>
</protein>
<evidence type="ECO:0000250" key="1"/>
<evidence type="ECO:0000305" key="2"/>
<reference key="1">
    <citation type="journal article" date="1999" name="Nature">
        <title>Genomic sequence comparison of two unrelated isolates of the human gastric pathogen Helicobacter pylori.</title>
        <authorList>
            <person name="Alm R.A."/>
            <person name="Ling L.-S.L."/>
            <person name="Moir D.T."/>
            <person name="King B.L."/>
            <person name="Brown E.D."/>
            <person name="Doig P.C."/>
            <person name="Smith D.R."/>
            <person name="Noonan B."/>
            <person name="Guild B.C."/>
            <person name="deJonge B.L."/>
            <person name="Carmel G."/>
            <person name="Tummino P.J."/>
            <person name="Caruso A."/>
            <person name="Uria-Nickelsen M."/>
            <person name="Mills D.M."/>
            <person name="Ives C."/>
            <person name="Gibson R."/>
            <person name="Merberg D."/>
            <person name="Mills S.D."/>
            <person name="Jiang Q."/>
            <person name="Taylor D.E."/>
            <person name="Vovis G.F."/>
            <person name="Trust T.J."/>
        </authorList>
    </citation>
    <scope>NUCLEOTIDE SEQUENCE [LARGE SCALE GENOMIC DNA]</scope>
    <source>
        <strain>J99 / ATCC 700824</strain>
    </source>
</reference>